<gene>
    <name evidence="3" type="primary">tufA</name>
    <name type="synonym">tuf</name>
    <name type="ordered locus">TTHA1694</name>
</gene>
<organism>
    <name type="scientific">Thermus thermophilus (strain ATCC 27634 / DSM 579 / HB8)</name>
    <dbReference type="NCBI Taxonomy" id="300852"/>
    <lineage>
        <taxon>Bacteria</taxon>
        <taxon>Thermotogati</taxon>
        <taxon>Deinococcota</taxon>
        <taxon>Deinococci</taxon>
        <taxon>Thermales</taxon>
        <taxon>Thermaceae</taxon>
        <taxon>Thermus</taxon>
    </lineage>
</organism>
<evidence type="ECO:0000250" key="1"/>
<evidence type="ECO:0000250" key="2">
    <source>
        <dbReference type="UniProtKB" id="P0CE47"/>
    </source>
</evidence>
<evidence type="ECO:0000255" key="3">
    <source>
        <dbReference type="HAMAP-Rule" id="MF_00118"/>
    </source>
</evidence>
<evidence type="ECO:0000269" key="4">
    <source>
    </source>
</evidence>
<evidence type="ECO:0000269" key="5">
    <source>
    </source>
</evidence>
<evidence type="ECO:0000269" key="6">
    <source>
    </source>
</evidence>
<evidence type="ECO:0000269" key="7">
    <source>
    </source>
</evidence>
<evidence type="ECO:0000305" key="8"/>
<evidence type="ECO:0007744" key="9">
    <source>
        <dbReference type="PDB" id="1HA3"/>
    </source>
</evidence>
<evidence type="ECO:0007744" key="10">
    <source>
        <dbReference type="PDB" id="1ZC8"/>
    </source>
</evidence>
<evidence type="ECO:0007744" key="11">
    <source>
        <dbReference type="PDB" id="2C78"/>
    </source>
</evidence>
<evidence type="ECO:0007744" key="12">
    <source>
        <dbReference type="PDB" id="4V5G"/>
    </source>
</evidence>
<evidence type="ECO:0007744" key="13">
    <source>
        <dbReference type="PDB" id="4V5P"/>
    </source>
</evidence>
<evidence type="ECO:0007744" key="14">
    <source>
        <dbReference type="PDB" id="4V5Q"/>
    </source>
</evidence>
<evidence type="ECO:0007744" key="15">
    <source>
        <dbReference type="PDB" id="4V5R"/>
    </source>
</evidence>
<evidence type="ECO:0007744" key="16">
    <source>
        <dbReference type="PDB" id="4V5S"/>
    </source>
</evidence>
<evidence type="ECO:0007744" key="17">
    <source>
        <dbReference type="PDB" id="4V8Q"/>
    </source>
</evidence>
<evidence type="ECO:0007829" key="18">
    <source>
        <dbReference type="PDB" id="2C78"/>
    </source>
</evidence>
<name>EFTU1_THET8</name>
<accession>Q5SHN6</accession>
<dbReference type="EC" id="3.6.5.3" evidence="3"/>
<dbReference type="EMBL" id="X05977">
    <property type="protein sequence ID" value="CAA29397.1"/>
    <property type="molecule type" value="Genomic_DNA"/>
</dbReference>
<dbReference type="EMBL" id="X06657">
    <property type="protein sequence ID" value="CAA29856.1"/>
    <property type="molecule type" value="Genomic_DNA"/>
</dbReference>
<dbReference type="EMBL" id="AP008226">
    <property type="protein sequence ID" value="BAD71517.1"/>
    <property type="molecule type" value="Genomic_DNA"/>
</dbReference>
<dbReference type="PIR" id="S00229">
    <property type="entry name" value="S00229"/>
</dbReference>
<dbReference type="PIR" id="S17146">
    <property type="entry name" value="S17146"/>
</dbReference>
<dbReference type="RefSeq" id="WP_011228847.1">
    <property type="nucleotide sequence ID" value="NC_006461.1"/>
</dbReference>
<dbReference type="RefSeq" id="YP_144960.1">
    <property type="nucleotide sequence ID" value="NC_006461.1"/>
</dbReference>
<dbReference type="PDB" id="1HA3">
    <property type="method" value="X-ray"/>
    <property type="resolution" value="2.00 A"/>
    <property type="chains" value="A/B=2-406"/>
</dbReference>
<dbReference type="PDB" id="1ZC8">
    <property type="method" value="EM"/>
    <property type="resolution" value="13.00 A"/>
    <property type="chains" value="Y=2-406"/>
</dbReference>
<dbReference type="PDB" id="2C78">
    <property type="method" value="X-ray"/>
    <property type="resolution" value="1.40 A"/>
    <property type="chains" value="A=2-406"/>
</dbReference>
<dbReference type="PDB" id="4V5G">
    <property type="method" value="X-ray"/>
    <property type="resolution" value="3.60 A"/>
    <property type="chains" value="AZ/CZ=1-406"/>
</dbReference>
<dbReference type="PDB" id="4V5P">
    <property type="method" value="X-ray"/>
    <property type="resolution" value="3.10 A"/>
    <property type="chains" value="AZ/CZ=2-406"/>
</dbReference>
<dbReference type="PDB" id="4V5Q">
    <property type="method" value="X-ray"/>
    <property type="resolution" value="3.10 A"/>
    <property type="chains" value="AZ/CZ=2-406"/>
</dbReference>
<dbReference type="PDB" id="4V5R">
    <property type="method" value="X-ray"/>
    <property type="resolution" value="3.10 A"/>
    <property type="chains" value="AZ/CZ=2-406"/>
</dbReference>
<dbReference type="PDB" id="4V5S">
    <property type="method" value="X-ray"/>
    <property type="resolution" value="3.10 A"/>
    <property type="chains" value="AZ/CZ=2-406"/>
</dbReference>
<dbReference type="PDB" id="4V8Q">
    <property type="method" value="X-ray"/>
    <property type="resolution" value="3.10 A"/>
    <property type="chains" value="BZ=2-406"/>
</dbReference>
<dbReference type="PDBsum" id="1HA3"/>
<dbReference type="PDBsum" id="1ZC8"/>
<dbReference type="PDBsum" id="2C78"/>
<dbReference type="PDBsum" id="4V5G"/>
<dbReference type="PDBsum" id="4V5P"/>
<dbReference type="PDBsum" id="4V5Q"/>
<dbReference type="PDBsum" id="4V5R"/>
<dbReference type="PDBsum" id="4V5S"/>
<dbReference type="PDBsum" id="4V8Q"/>
<dbReference type="EMDB" id="EMD-1122"/>
<dbReference type="SMR" id="Q5SHN6"/>
<dbReference type="IntAct" id="Q5SHN6">
    <property type="interactions" value="50"/>
</dbReference>
<dbReference type="EnsemblBacteria" id="BAD71517">
    <property type="protein sequence ID" value="BAD71517"/>
    <property type="gene ID" value="BAD71517"/>
</dbReference>
<dbReference type="GeneID" id="3167925"/>
<dbReference type="KEGG" id="ttj:TTHA1694"/>
<dbReference type="PATRIC" id="fig|300852.9.peg.1664"/>
<dbReference type="eggNOG" id="COG0050">
    <property type="taxonomic scope" value="Bacteria"/>
</dbReference>
<dbReference type="HOGENOM" id="CLU_007265_0_1_0"/>
<dbReference type="PhylomeDB" id="Q5SHN6"/>
<dbReference type="EvolutionaryTrace" id="Q5SHN6"/>
<dbReference type="Proteomes" id="UP000000532">
    <property type="component" value="Chromosome"/>
</dbReference>
<dbReference type="GO" id="GO:0005829">
    <property type="term" value="C:cytosol"/>
    <property type="evidence" value="ECO:0007669"/>
    <property type="project" value="TreeGrafter"/>
</dbReference>
<dbReference type="GO" id="GO:0005525">
    <property type="term" value="F:GTP binding"/>
    <property type="evidence" value="ECO:0007669"/>
    <property type="project" value="UniProtKB-UniRule"/>
</dbReference>
<dbReference type="GO" id="GO:0003924">
    <property type="term" value="F:GTPase activity"/>
    <property type="evidence" value="ECO:0007669"/>
    <property type="project" value="InterPro"/>
</dbReference>
<dbReference type="GO" id="GO:0003723">
    <property type="term" value="F:RNA binding"/>
    <property type="evidence" value="ECO:0007669"/>
    <property type="project" value="UniProtKB-KW"/>
</dbReference>
<dbReference type="GO" id="GO:0003746">
    <property type="term" value="F:translation elongation factor activity"/>
    <property type="evidence" value="ECO:0007669"/>
    <property type="project" value="UniProtKB-UniRule"/>
</dbReference>
<dbReference type="CDD" id="cd01884">
    <property type="entry name" value="EF_Tu"/>
    <property type="match status" value="1"/>
</dbReference>
<dbReference type="CDD" id="cd03697">
    <property type="entry name" value="EFTU_II"/>
    <property type="match status" value="1"/>
</dbReference>
<dbReference type="CDD" id="cd03707">
    <property type="entry name" value="EFTU_III"/>
    <property type="match status" value="1"/>
</dbReference>
<dbReference type="FunFam" id="2.40.30.10:FF:000001">
    <property type="entry name" value="Elongation factor Tu"/>
    <property type="match status" value="1"/>
</dbReference>
<dbReference type="FunFam" id="3.40.50.300:FF:000003">
    <property type="entry name" value="Elongation factor Tu"/>
    <property type="match status" value="1"/>
</dbReference>
<dbReference type="Gene3D" id="3.40.50.300">
    <property type="entry name" value="P-loop containing nucleotide triphosphate hydrolases"/>
    <property type="match status" value="1"/>
</dbReference>
<dbReference type="Gene3D" id="2.40.30.10">
    <property type="entry name" value="Translation factors"/>
    <property type="match status" value="2"/>
</dbReference>
<dbReference type="HAMAP" id="MF_00118_B">
    <property type="entry name" value="EF_Tu_B"/>
    <property type="match status" value="1"/>
</dbReference>
<dbReference type="InterPro" id="IPR041709">
    <property type="entry name" value="EF-Tu_GTP-bd"/>
</dbReference>
<dbReference type="InterPro" id="IPR050055">
    <property type="entry name" value="EF-Tu_GTPase"/>
</dbReference>
<dbReference type="InterPro" id="IPR004161">
    <property type="entry name" value="EFTu-like_2"/>
</dbReference>
<dbReference type="InterPro" id="IPR033720">
    <property type="entry name" value="EFTU_2"/>
</dbReference>
<dbReference type="InterPro" id="IPR031157">
    <property type="entry name" value="G_TR_CS"/>
</dbReference>
<dbReference type="InterPro" id="IPR027417">
    <property type="entry name" value="P-loop_NTPase"/>
</dbReference>
<dbReference type="InterPro" id="IPR005225">
    <property type="entry name" value="Small_GTP-bd"/>
</dbReference>
<dbReference type="InterPro" id="IPR000795">
    <property type="entry name" value="T_Tr_GTP-bd_dom"/>
</dbReference>
<dbReference type="InterPro" id="IPR009000">
    <property type="entry name" value="Transl_B-barrel_sf"/>
</dbReference>
<dbReference type="InterPro" id="IPR009001">
    <property type="entry name" value="Transl_elong_EF1A/Init_IF2_C"/>
</dbReference>
<dbReference type="InterPro" id="IPR004541">
    <property type="entry name" value="Transl_elong_EFTu/EF1A_bac/org"/>
</dbReference>
<dbReference type="InterPro" id="IPR004160">
    <property type="entry name" value="Transl_elong_EFTu/EF1A_C"/>
</dbReference>
<dbReference type="NCBIfam" id="TIGR00485">
    <property type="entry name" value="EF-Tu"/>
    <property type="match status" value="1"/>
</dbReference>
<dbReference type="NCBIfam" id="NF000766">
    <property type="entry name" value="PRK00049.1"/>
    <property type="match status" value="1"/>
</dbReference>
<dbReference type="NCBIfam" id="NF009372">
    <property type="entry name" value="PRK12735.1"/>
    <property type="match status" value="1"/>
</dbReference>
<dbReference type="NCBIfam" id="NF009373">
    <property type="entry name" value="PRK12736.1"/>
    <property type="match status" value="1"/>
</dbReference>
<dbReference type="NCBIfam" id="TIGR00231">
    <property type="entry name" value="small_GTP"/>
    <property type="match status" value="1"/>
</dbReference>
<dbReference type="PANTHER" id="PTHR43721:SF22">
    <property type="entry name" value="ELONGATION FACTOR TU, MITOCHONDRIAL"/>
    <property type="match status" value="1"/>
</dbReference>
<dbReference type="PANTHER" id="PTHR43721">
    <property type="entry name" value="ELONGATION FACTOR TU-RELATED"/>
    <property type="match status" value="1"/>
</dbReference>
<dbReference type="Pfam" id="PF00009">
    <property type="entry name" value="GTP_EFTU"/>
    <property type="match status" value="1"/>
</dbReference>
<dbReference type="Pfam" id="PF03144">
    <property type="entry name" value="GTP_EFTU_D2"/>
    <property type="match status" value="1"/>
</dbReference>
<dbReference type="Pfam" id="PF03143">
    <property type="entry name" value="GTP_EFTU_D3"/>
    <property type="match status" value="1"/>
</dbReference>
<dbReference type="PRINTS" id="PR00315">
    <property type="entry name" value="ELONGATNFCT"/>
</dbReference>
<dbReference type="SUPFAM" id="SSF50465">
    <property type="entry name" value="EF-Tu/eEF-1alpha/eIF2-gamma C-terminal domain"/>
    <property type="match status" value="1"/>
</dbReference>
<dbReference type="SUPFAM" id="SSF52540">
    <property type="entry name" value="P-loop containing nucleoside triphosphate hydrolases"/>
    <property type="match status" value="1"/>
</dbReference>
<dbReference type="SUPFAM" id="SSF50447">
    <property type="entry name" value="Translation proteins"/>
    <property type="match status" value="1"/>
</dbReference>
<dbReference type="PROSITE" id="PS00301">
    <property type="entry name" value="G_TR_1"/>
    <property type="match status" value="1"/>
</dbReference>
<dbReference type="PROSITE" id="PS51722">
    <property type="entry name" value="G_TR_2"/>
    <property type="match status" value="1"/>
</dbReference>
<proteinExistence type="evidence at protein level"/>
<keyword id="KW-0002">3D-structure</keyword>
<keyword id="KW-0963">Cytoplasm</keyword>
<keyword id="KW-0251">Elongation factor</keyword>
<keyword id="KW-0342">GTP-binding</keyword>
<keyword id="KW-0378">Hydrolase</keyword>
<keyword id="KW-0460">Magnesium</keyword>
<keyword id="KW-0479">Metal-binding</keyword>
<keyword id="KW-0547">Nucleotide-binding</keyword>
<keyword id="KW-0597">Phosphoprotein</keyword>
<keyword id="KW-0648">Protein biosynthesis</keyword>
<keyword id="KW-1185">Reference proteome</keyword>
<keyword id="KW-0694">RNA-binding</keyword>
<sequence>MAKGEFVRTKPHVNVGTIGHVDHGKTTLTAALTYVAAAENPNVEVKDYGDIDKAPEERARGITINTAHVEYETAKRHYSHVDCPGHADYIKNMITGAAQMDGAILVVSAADGPMPQTREHILLARQVGVPYIVVFMNKVDMVDDPELLDLVEMEVRDLLNQYEFPGDEVPVIRGSALLALEQMHRNPKTRRGENEWVDKIWELLDAIDEYIPTPVRDVDKPFLMPVEDVFTITGRGTVATGRIERGKVKVGDEVEIVGLAPETRRTVVTGVEMHRKTLQEGIAGDNVGVLLRGVSREEVERGQVLAKPGSITPHTKFEASVYVLKKEEGGRHTGFFSGYRPQFYFRTTDVTGVVQLPPGVEMVMPGDNVTFTVELIKPVALEEGLRFAIREGGRTVGAGVVTKILE</sequence>
<reference key="1">
    <citation type="journal article" date="1987" name="Nucleic Acids Res.">
        <title>Sequence and identification of the nucleotide binding site for the elongation factor Tu from Thermus thermophilus HB8.</title>
        <authorList>
            <person name="Seidler L."/>
            <person name="Peter M."/>
            <person name="Meissner F."/>
            <person name="Sprinzl M."/>
        </authorList>
    </citation>
    <scope>NUCLEOTIDE SEQUENCE [GENOMIC DNA]</scope>
</reference>
<reference key="2">
    <citation type="journal article" date="1987" name="Eur. J. Biochem.">
        <title>Molecular cloning and sequence determination of the tuf gene coding for the elongation factor Tu of Thermus thermophilus HB8.</title>
        <authorList>
            <person name="Kushiro A."/>
            <person name="Shimizu M."/>
            <person name="Tomita K."/>
        </authorList>
    </citation>
    <scope>NUCLEOTIDE SEQUENCE [GENOMIC DNA]</scope>
</reference>
<reference key="3">
    <citation type="submission" date="2004-11" db="EMBL/GenBank/DDBJ databases">
        <title>Complete genome sequence of Thermus thermophilus HB8.</title>
        <authorList>
            <person name="Masui R."/>
            <person name="Kurokawa K."/>
            <person name="Nakagawa N."/>
            <person name="Tokunaga F."/>
            <person name="Koyama Y."/>
            <person name="Shibata T."/>
            <person name="Oshima T."/>
            <person name="Yokoyama S."/>
            <person name="Yasunaga T."/>
            <person name="Kuramitsu S."/>
        </authorList>
    </citation>
    <scope>NUCLEOTIDE SEQUENCE [LARGE SCALE GENOMIC DNA]</scope>
    <source>
        <strain>ATCC 27634 / DSM 579 / HB8</strain>
    </source>
</reference>
<reference key="4">
    <citation type="journal article" date="1993" name="J. Biol. Chem.">
        <title>Prokaryotic elongation factor Tu is phosphorylated in vivo.</title>
        <authorList>
            <person name="Lippmann C."/>
            <person name="Lindschau C."/>
            <person name="Vijgenboom E."/>
            <person name="Schroeder W."/>
            <person name="Bosch L."/>
            <person name="Erdmann V.A."/>
        </authorList>
    </citation>
    <scope>PHOSPHORYLATION</scope>
</reference>
<reference key="5">
    <citation type="journal article" date="2016" name="PLoS Biol.">
        <title>Elongation factor Tu prevents misediting of Gly-tRNA(Gly) caused by the design behind the chiral proofreading site of D-aminoacyl-tRNA deacylase.</title>
        <authorList>
            <person name="Routh S.B."/>
            <person name="Pawar K.I."/>
            <person name="Ahmad S."/>
            <person name="Singh S."/>
            <person name="Suma K."/>
            <person name="Kumar M."/>
            <person name="Kuncha S.K."/>
            <person name="Yadav K."/>
            <person name="Kruparani S.P."/>
            <person name="Sankaranarayanan R."/>
        </authorList>
    </citation>
    <scope>FUNCTION</scope>
</reference>
<reference evidence="9" key="6">
    <citation type="journal article" date="2001" name="J. Biol. Chem.">
        <title>Conformational change of elongation factor Tu (EF-Tu) induced by antibiotic binding. Crystal structure of the complex between EF-Tu.GDP and aurodox.</title>
        <authorList>
            <person name="Vogeley L."/>
            <person name="Palm G.J."/>
            <person name="Mesters J.R."/>
            <person name="Hilgenfeld R."/>
        </authorList>
    </citation>
    <scope>X-RAY CRYSTALLOGRAPHY (2.0 ANGSTROMS) OF COMPLEX WITH GDP AND AURODOX</scope>
</reference>
<reference evidence="10" key="7">
    <citation type="journal article" date="2003" name="Science">
        <title>Visualizing tmRNA entry into a stalled ribosome.</title>
        <authorList>
            <person name="Valle M."/>
            <person name="Gillet R."/>
            <person name="Kaur S."/>
            <person name="Henne A."/>
            <person name="Ramakrishnan V."/>
            <person name="Frank J."/>
        </authorList>
    </citation>
    <scope>STRUCTURE BY ELECTRON MICROSCOPY (13.00 ANGSTROMS)</scope>
    <scope>FUNCTION</scope>
    <scope>SUBUNIT</scope>
    <scope>TMRNA-BINDING</scope>
    <source>
        <strain>ATCC 27634 / DSM 579 / HB8</strain>
    </source>
</reference>
<feature type="initiator methionine" description="Removed">
    <location>
        <position position="1"/>
    </location>
</feature>
<feature type="chain" id="PRO_0000091423" description="Elongation factor Tu-A">
    <location>
        <begin position="2"/>
        <end position="406"/>
    </location>
</feature>
<feature type="domain" description="tr-type G">
    <location>
        <begin position="10"/>
        <end position="215"/>
    </location>
</feature>
<feature type="region of interest" description="G1" evidence="1">
    <location>
        <begin position="19"/>
        <end position="26"/>
    </location>
</feature>
<feature type="region of interest" description="G2" evidence="1">
    <location>
        <begin position="61"/>
        <end position="65"/>
    </location>
</feature>
<feature type="region of interest" description="G3" evidence="1">
    <location>
        <begin position="82"/>
        <end position="85"/>
    </location>
</feature>
<feature type="region of interest" description="G4" evidence="1">
    <location>
        <begin position="137"/>
        <end position="140"/>
    </location>
</feature>
<feature type="region of interest" description="G5" evidence="1">
    <location>
        <begin position="175"/>
        <end position="177"/>
    </location>
</feature>
<feature type="binding site" evidence="4 9 11 12 13 14 15 16 17">
    <location>
        <begin position="19"/>
        <end position="26"/>
    </location>
    <ligand>
        <name>GTP</name>
        <dbReference type="ChEBI" id="CHEBI:37565"/>
    </ligand>
</feature>
<feature type="binding site" evidence="3">
    <location>
        <position position="26"/>
    </location>
    <ligand>
        <name>Mg(2+)</name>
        <dbReference type="ChEBI" id="CHEBI:18420"/>
    </ligand>
</feature>
<feature type="binding site" evidence="11">
    <location>
        <begin position="82"/>
        <end position="86"/>
    </location>
    <ligand>
        <name>GTP</name>
        <dbReference type="ChEBI" id="CHEBI:37565"/>
    </ligand>
</feature>
<feature type="binding site" evidence="4 9 11 12 13 14 15 16 17">
    <location>
        <begin position="137"/>
        <end position="140"/>
    </location>
    <ligand>
        <name>GTP</name>
        <dbReference type="ChEBI" id="CHEBI:37565"/>
    </ligand>
</feature>
<feature type="modified residue" description="Phosphothreonine" evidence="2">
    <location>
        <position position="395"/>
    </location>
</feature>
<feature type="sequence conflict" description="In Ref. 1; CAA29397." evidence="8" ref="1">
    <original>A</original>
    <variation>G</variation>
    <location>
        <position position="380"/>
    </location>
</feature>
<feature type="strand" evidence="18">
    <location>
        <begin position="12"/>
        <end position="18"/>
    </location>
</feature>
<feature type="helix" evidence="18">
    <location>
        <begin position="25"/>
        <end position="38"/>
    </location>
</feature>
<feature type="helix" evidence="18">
    <location>
        <begin position="48"/>
        <end position="51"/>
    </location>
</feature>
<feature type="helix" evidence="18">
    <location>
        <begin position="55"/>
        <end position="60"/>
    </location>
</feature>
<feature type="strand" evidence="18">
    <location>
        <begin position="67"/>
        <end position="72"/>
    </location>
</feature>
<feature type="strand" evidence="18">
    <location>
        <begin position="77"/>
        <end position="82"/>
    </location>
</feature>
<feature type="helix" evidence="18">
    <location>
        <begin position="87"/>
        <end position="89"/>
    </location>
</feature>
<feature type="helix" evidence="18">
    <location>
        <begin position="90"/>
        <end position="97"/>
    </location>
</feature>
<feature type="strand" evidence="18">
    <location>
        <begin position="101"/>
        <end position="108"/>
    </location>
</feature>
<feature type="turn" evidence="18">
    <location>
        <begin position="109"/>
        <end position="111"/>
    </location>
</feature>
<feature type="helix" evidence="18">
    <location>
        <begin position="115"/>
        <end position="126"/>
    </location>
</feature>
<feature type="strand" evidence="18">
    <location>
        <begin position="132"/>
        <end position="137"/>
    </location>
</feature>
<feature type="helix" evidence="18">
    <location>
        <begin position="139"/>
        <end position="141"/>
    </location>
</feature>
<feature type="helix" evidence="18">
    <location>
        <begin position="145"/>
        <end position="161"/>
    </location>
</feature>
<feature type="turn" evidence="18">
    <location>
        <begin position="166"/>
        <end position="168"/>
    </location>
</feature>
<feature type="strand" evidence="18">
    <location>
        <begin position="171"/>
        <end position="173"/>
    </location>
</feature>
<feature type="helix" evidence="18">
    <location>
        <begin position="176"/>
        <end position="185"/>
    </location>
</feature>
<feature type="helix" evidence="18">
    <location>
        <begin position="195"/>
        <end position="210"/>
    </location>
</feature>
<feature type="strand" evidence="18">
    <location>
        <begin position="223"/>
        <end position="225"/>
    </location>
</feature>
<feature type="strand" evidence="18">
    <location>
        <begin position="228"/>
        <end position="232"/>
    </location>
</feature>
<feature type="turn" evidence="18">
    <location>
        <begin position="233"/>
        <end position="235"/>
    </location>
</feature>
<feature type="strand" evidence="18">
    <location>
        <begin position="236"/>
        <end position="242"/>
    </location>
</feature>
<feature type="strand" evidence="18">
    <location>
        <begin position="245"/>
        <end position="249"/>
    </location>
</feature>
<feature type="strand" evidence="18">
    <location>
        <begin position="253"/>
        <end position="262"/>
    </location>
</feature>
<feature type="strand" evidence="18">
    <location>
        <begin position="264"/>
        <end position="273"/>
    </location>
</feature>
<feature type="strand" evidence="18">
    <location>
        <begin position="276"/>
        <end position="282"/>
    </location>
</feature>
<feature type="strand" evidence="18">
    <location>
        <begin position="286"/>
        <end position="293"/>
    </location>
</feature>
<feature type="turn" evidence="18">
    <location>
        <begin position="296"/>
        <end position="298"/>
    </location>
</feature>
<feature type="strand" evidence="18">
    <location>
        <begin position="304"/>
        <end position="307"/>
    </location>
</feature>
<feature type="strand" evidence="18">
    <location>
        <begin position="310"/>
        <end position="323"/>
    </location>
</feature>
<feature type="helix" evidence="18">
    <location>
        <begin position="326"/>
        <end position="328"/>
    </location>
</feature>
<feature type="strand" evidence="18">
    <location>
        <begin position="342"/>
        <end position="345"/>
    </location>
</feature>
<feature type="strand" evidence="18">
    <location>
        <begin position="348"/>
        <end position="355"/>
    </location>
</feature>
<feature type="strand" evidence="18">
    <location>
        <begin position="368"/>
        <end position="381"/>
    </location>
</feature>
<feature type="strand" evidence="18">
    <location>
        <begin position="386"/>
        <end position="391"/>
    </location>
</feature>
<feature type="strand" evidence="18">
    <location>
        <begin position="394"/>
        <end position="404"/>
    </location>
</feature>
<protein>
    <recommendedName>
        <fullName evidence="3">Elongation factor Tu-A</fullName>
        <shortName evidence="3">EF-Tu-A</shortName>
        <ecNumber evidence="3">3.6.5.3</ecNumber>
    </recommendedName>
</protein>
<comment type="function">
    <text evidence="3">GTP hydrolase that promotes the GTP-dependent binding of aminoacyl-tRNA to the A-site of ribosomes during protein biosynthesis.</text>
</comment>
<comment type="function">
    <text evidence="5">EF-Tu-GDP binds to the acceptor arm of tmRNA by interacting with its acceptor arm, suggesting that GTP hydrolysis by EF-Tu is essential for tmRNA function.</text>
</comment>
<comment type="function">
    <text evidence="6">Protects glycyl-tRNA(Gly) from hydrolysis by E.coli D-aminoacyl-tRNA deacylase (dtd) (PubMed:27224426).</text>
</comment>
<comment type="catalytic activity">
    <reaction evidence="3">
        <text>GTP + H2O = GDP + phosphate + H(+)</text>
        <dbReference type="Rhea" id="RHEA:19669"/>
        <dbReference type="ChEBI" id="CHEBI:15377"/>
        <dbReference type="ChEBI" id="CHEBI:15378"/>
        <dbReference type="ChEBI" id="CHEBI:37565"/>
        <dbReference type="ChEBI" id="CHEBI:43474"/>
        <dbReference type="ChEBI" id="CHEBI:58189"/>
        <dbReference type="EC" id="3.6.5.3"/>
    </reaction>
    <physiologicalReaction direction="left-to-right" evidence="3">
        <dbReference type="Rhea" id="RHEA:19670"/>
    </physiologicalReaction>
</comment>
<comment type="subunit">
    <text evidence="3 5">Monomer (By similarity). Binds to the 70S ribosome, contacts tmRNA during trans-translation (PubMed:12677067).</text>
</comment>
<comment type="subcellular location">
    <subcellularLocation>
        <location>Cytoplasm</location>
    </subcellularLocation>
</comment>
<comment type="PTM">
    <text evidence="7">Phosphorylated on a threonine.</text>
</comment>
<comment type="similarity">
    <text evidence="3">Belongs to the TRAFAC class translation factor GTPase superfamily. Classic translation factor GTPase family. EF-Tu/EF-1A subfamily.</text>
</comment>